<protein>
    <recommendedName>
        <fullName>NADH-ubiquinone oxidoreductase chain 2</fullName>
        <ecNumber>7.1.1.2</ecNumber>
    </recommendedName>
    <alternativeName>
        <fullName>NADH dehydrogenase subunit 2</fullName>
    </alternativeName>
</protein>
<gene>
    <name type="primary">nad2</name>
    <name type="ORF">DDB_G0294020</name>
</gene>
<evidence type="ECO:0000250" key="1"/>
<evidence type="ECO:0000255" key="2"/>
<evidence type="ECO:0000305" key="3"/>
<dbReference type="EC" id="7.1.1.2"/>
<dbReference type="EMBL" id="D16579">
    <property type="protein sequence ID" value="BAA21119.1"/>
    <property type="molecule type" value="Genomic_DNA"/>
</dbReference>
<dbReference type="EMBL" id="AB000109">
    <property type="protein sequence ID" value="BAA78052.1"/>
    <property type="molecule type" value="Genomic_DNA"/>
</dbReference>
<dbReference type="PIR" id="T43748">
    <property type="entry name" value="T43748"/>
</dbReference>
<dbReference type="RefSeq" id="NP_050070.1">
    <property type="nucleotide sequence ID" value="NC_000895.1"/>
</dbReference>
<dbReference type="SMR" id="O21048"/>
<dbReference type="FunCoup" id="O21048">
    <property type="interactions" value="8"/>
</dbReference>
<dbReference type="STRING" id="44689.O21048"/>
<dbReference type="GeneID" id="2193892"/>
<dbReference type="KEGG" id="ddi:DidioMp03"/>
<dbReference type="dictyBase" id="DDB_G0294020">
    <property type="gene designation" value="nad2"/>
</dbReference>
<dbReference type="VEuPathDB" id="AmoebaDB:DidioMp03"/>
<dbReference type="InParanoid" id="O21048"/>
<dbReference type="OMA" id="LMFFSEP"/>
<dbReference type="PhylomeDB" id="O21048"/>
<dbReference type="PRO" id="PR:O21048"/>
<dbReference type="Proteomes" id="UP000002195">
    <property type="component" value="Mitochondrion"/>
</dbReference>
<dbReference type="GO" id="GO:0005743">
    <property type="term" value="C:mitochondrial inner membrane"/>
    <property type="evidence" value="ECO:0007669"/>
    <property type="project" value="UniProtKB-SubCell"/>
</dbReference>
<dbReference type="GO" id="GO:0008137">
    <property type="term" value="F:NADH dehydrogenase (ubiquinone) activity"/>
    <property type="evidence" value="ECO:0007669"/>
    <property type="project" value="UniProtKB-EC"/>
</dbReference>
<dbReference type="InterPro" id="IPR001750">
    <property type="entry name" value="ND/Mrp_TM"/>
</dbReference>
<dbReference type="PANTHER" id="PTHR22773">
    <property type="entry name" value="NADH DEHYDROGENASE"/>
    <property type="match status" value="1"/>
</dbReference>
<dbReference type="Pfam" id="PF00361">
    <property type="entry name" value="Proton_antipo_M"/>
    <property type="match status" value="1"/>
</dbReference>
<proteinExistence type="inferred from homology"/>
<accession>O21048</accession>
<reference key="1">
    <citation type="journal article" date="1997" name="Curr. Genet.">
        <title>Group-I introns in the cytochrome c oxidase genes of Dictyostelium discoideum: two related ORFs in one loop of a group-I intron, a cox1/2 hybrid gene and an unusually large cox3 gene.</title>
        <authorList>
            <person name="Ogawa S."/>
            <person name="Matsuo K."/>
            <person name="Angata K."/>
            <person name="Yanagisawa K."/>
            <person name="Tanaka Y."/>
        </authorList>
    </citation>
    <scope>NUCLEOTIDE SEQUENCE [GENOMIC DNA]</scope>
    <source>
        <strain>AX3</strain>
    </source>
</reference>
<reference key="2">
    <citation type="journal article" date="2000" name="Mol. Gen. Genet.">
        <title>The mitochondrial DNA of Dictyostelium discoideum: complete sequence, gene content and genome organization.</title>
        <authorList>
            <person name="Ogawa S."/>
            <person name="Yoshino R."/>
            <person name="Angata K."/>
            <person name="Iwamoto M."/>
            <person name="Pi M."/>
            <person name="Kuroe K."/>
            <person name="Matsuo K."/>
            <person name="Morio T."/>
            <person name="Urushihara H."/>
            <person name="Yanagisawa K."/>
            <person name="Tanaka Y."/>
        </authorList>
    </citation>
    <scope>NUCLEOTIDE SEQUENCE [LARGE SCALE GENOMIC DNA]</scope>
    <source>
        <strain>AX3</strain>
    </source>
</reference>
<organism>
    <name type="scientific">Dictyostelium discoideum</name>
    <name type="common">Social amoeba</name>
    <dbReference type="NCBI Taxonomy" id="44689"/>
    <lineage>
        <taxon>Eukaryota</taxon>
        <taxon>Amoebozoa</taxon>
        <taxon>Evosea</taxon>
        <taxon>Eumycetozoa</taxon>
        <taxon>Dictyostelia</taxon>
        <taxon>Dictyosteliales</taxon>
        <taxon>Dictyosteliaceae</taxon>
        <taxon>Dictyostelium</taxon>
    </lineage>
</organism>
<comment type="function">
    <text evidence="1">Core subunit of the mitochondrial membrane respiratory chain NADH dehydrogenase (Complex I) that is believed to belong to the minimal assembly required for catalysis. Complex I functions in the transfer of electrons from NADH to the respiratory chain. The immediate electron acceptor for the enzyme is believed to be ubiquinone (By similarity).</text>
</comment>
<comment type="catalytic activity">
    <reaction>
        <text>a ubiquinone + NADH + 5 H(+)(in) = a ubiquinol + NAD(+) + 4 H(+)(out)</text>
        <dbReference type="Rhea" id="RHEA:29091"/>
        <dbReference type="Rhea" id="RHEA-COMP:9565"/>
        <dbReference type="Rhea" id="RHEA-COMP:9566"/>
        <dbReference type="ChEBI" id="CHEBI:15378"/>
        <dbReference type="ChEBI" id="CHEBI:16389"/>
        <dbReference type="ChEBI" id="CHEBI:17976"/>
        <dbReference type="ChEBI" id="CHEBI:57540"/>
        <dbReference type="ChEBI" id="CHEBI:57945"/>
        <dbReference type="EC" id="7.1.1.2"/>
    </reaction>
</comment>
<comment type="subcellular location">
    <subcellularLocation>
        <location>Mitochondrion inner membrane</location>
        <topology>Multi-pass membrane protein</topology>
    </subcellularLocation>
</comment>
<comment type="similarity">
    <text evidence="3">Belongs to the complex I subunit 2 family.</text>
</comment>
<keyword id="KW-0249">Electron transport</keyword>
<keyword id="KW-0472">Membrane</keyword>
<keyword id="KW-0496">Mitochondrion</keyword>
<keyword id="KW-0999">Mitochondrion inner membrane</keyword>
<keyword id="KW-0520">NAD</keyword>
<keyword id="KW-1185">Reference proteome</keyword>
<keyword id="KW-0679">Respiratory chain</keyword>
<keyword id="KW-1278">Translocase</keyword>
<keyword id="KW-0812">Transmembrane</keyword>
<keyword id="KW-1133">Transmembrane helix</keyword>
<keyword id="KW-0813">Transport</keyword>
<keyword id="KW-0830">Ubiquinone</keyword>
<sequence length="488" mass="54842">MMFLFENSINMIKYSIYLVPLIIMILLSISIKEDSNRMMLLFKSLKLTIILILVLLTIEEAIYVKLNGHLIKTELITFVEYILLVVSYLIISMFEEGVKEGRKTKITEEALILMYSSLIGMLISMEAHNLITLFLSLEITSICFYILALNKNSRKVSIEGGLKYYIIGGIASTIILLGIVSIYKNTGSLMYTDILVIGMERIGNYQVQMGIALIVLGLIIKLGVAPFHGWLIDTYEGTGMLMTFYLTITQKIVTIIVLINLYKNLITYLNIEVINKGLLVLILVTLIVGTVGSLRQQKVIRFIAYSAIVNSALLILFFVGNNTEELIIYSIYYLINYIIGLAVLINIIIGVVKTKNGGNIEILSELKNIWLNNKVIGISLIIVLIYLAGLPPFTNFISKIILILPLIVEGKIYITMIIFFLTVGIMIYYMNVVKIIIIDKKQEVGVETYKMTKGGSITNIVGGIIWIIISQIYLDEIISIIKIIVAIN</sequence>
<feature type="chain" id="PRO_0000311824" description="NADH-ubiquinone oxidoreductase chain 2">
    <location>
        <begin position="1"/>
        <end position="488"/>
    </location>
</feature>
<feature type="transmembrane region" description="Helical" evidence="2">
    <location>
        <begin position="11"/>
        <end position="31"/>
    </location>
</feature>
<feature type="transmembrane region" description="Helical" evidence="2">
    <location>
        <begin position="38"/>
        <end position="58"/>
    </location>
</feature>
<feature type="transmembrane region" description="Helical" evidence="2">
    <location>
        <begin position="74"/>
        <end position="94"/>
    </location>
</feature>
<feature type="transmembrane region" description="Helical" evidence="2">
    <location>
        <begin position="106"/>
        <end position="126"/>
    </location>
</feature>
<feature type="transmembrane region" description="Helical" evidence="2">
    <location>
        <begin position="129"/>
        <end position="149"/>
    </location>
</feature>
<feature type="transmembrane region" description="Helical" evidence="2">
    <location>
        <begin position="162"/>
        <end position="182"/>
    </location>
</feature>
<feature type="transmembrane region" description="Helical" evidence="2">
    <location>
        <begin position="211"/>
        <end position="231"/>
    </location>
</feature>
<feature type="transmembrane region" description="Helical" evidence="2">
    <location>
        <begin position="239"/>
        <end position="259"/>
    </location>
</feature>
<feature type="transmembrane region" description="Helical" evidence="2">
    <location>
        <begin position="271"/>
        <end position="291"/>
    </location>
</feature>
<feature type="transmembrane region" description="Helical" evidence="2">
    <location>
        <begin position="299"/>
        <end position="319"/>
    </location>
</feature>
<feature type="transmembrane region" description="Helical" evidence="2">
    <location>
        <begin position="331"/>
        <end position="351"/>
    </location>
</feature>
<feature type="transmembrane region" description="Helical" evidence="2">
    <location>
        <begin position="376"/>
        <end position="396"/>
    </location>
</feature>
<feature type="transmembrane region" description="Helical" evidence="2">
    <location>
        <begin position="412"/>
        <end position="434"/>
    </location>
</feature>
<feature type="transmembrane region" description="Helical" evidence="2">
    <location>
        <begin position="460"/>
        <end position="480"/>
    </location>
</feature>
<geneLocation type="mitochondrion"/>
<name>NU2M_DICDI</name>